<comment type="function">
    <text evidence="1">Plays a role in virus cell tropism, and may be required for efficient virus replication in macrophages.</text>
</comment>
<comment type="subcellular location">
    <subcellularLocation>
        <location evidence="3">Host membrane</location>
        <topology evidence="3">Multi-pass membrane protein</topology>
    </subcellularLocation>
</comment>
<comment type="similarity">
    <text evidence="3">Belongs to the asfivirus MGF 110 family.</text>
</comment>
<sequence>MKVFLGLLLGFSIILILTYQSPTTQHPPKEELAYWCTYAKSCDFCWDCQNDTCINKVINESISITSIVNCRVTRDSQSCFYDISVKIPNHHSMECSYPRLYEHEMFMEKWRDEYWPIIIKQCCFYLVFSFAFAGCVAFAICKNLRLRTTIKLLILLSILVWLSQPILNN</sequence>
<proteinExistence type="inferred from homology"/>
<gene>
    <name type="ordered locus">Ken-021</name>
</gene>
<protein>
    <recommendedName>
        <fullName>Protein MGF 110-12L</fullName>
    </recommendedName>
</protein>
<reference key="1">
    <citation type="submission" date="2003-03" db="EMBL/GenBank/DDBJ databases">
        <title>African swine fever virus genomes.</title>
        <authorList>
            <person name="Kutish G.F."/>
            <person name="Rock D.L."/>
        </authorList>
    </citation>
    <scope>NUCLEOTIDE SEQUENCE [LARGE SCALE GENOMIC DNA]</scope>
</reference>
<organism>
    <name type="scientific">African swine fever virus (isolate Pig/Kenya/KEN-50/1950)</name>
    <name type="common">ASFV</name>
    <dbReference type="NCBI Taxonomy" id="561445"/>
    <lineage>
        <taxon>Viruses</taxon>
        <taxon>Varidnaviria</taxon>
        <taxon>Bamfordvirae</taxon>
        <taxon>Nucleocytoviricota</taxon>
        <taxon>Pokkesviricetes</taxon>
        <taxon>Asfuvirales</taxon>
        <taxon>Asfarviridae</taxon>
        <taxon>Asfivirus</taxon>
        <taxon>African swine fever virus</taxon>
    </lineage>
</organism>
<name>11012_ASFK5</name>
<accession>P0C9J8</accession>
<feature type="chain" id="PRO_0000373220" description="Protein MGF 110-12L">
    <location>
        <begin position="1"/>
        <end position="169"/>
    </location>
</feature>
<feature type="transmembrane region" description="Helical" evidence="2">
    <location>
        <begin position="2"/>
        <end position="20"/>
    </location>
</feature>
<feature type="transmembrane region" description="Helical" evidence="2">
    <location>
        <begin position="121"/>
        <end position="141"/>
    </location>
</feature>
<feature type="transmembrane region" description="Helical" evidence="2">
    <location>
        <begin position="148"/>
        <end position="168"/>
    </location>
</feature>
<dbReference type="EMBL" id="AY261360">
    <property type="status" value="NOT_ANNOTATED_CDS"/>
    <property type="molecule type" value="Genomic_DNA"/>
</dbReference>
<dbReference type="Proteomes" id="UP000000861">
    <property type="component" value="Segment"/>
</dbReference>
<dbReference type="GO" id="GO:0033644">
    <property type="term" value="C:host cell membrane"/>
    <property type="evidence" value="ECO:0007669"/>
    <property type="project" value="UniProtKB-SubCell"/>
</dbReference>
<dbReference type="GO" id="GO:0016020">
    <property type="term" value="C:membrane"/>
    <property type="evidence" value="ECO:0007669"/>
    <property type="project" value="UniProtKB-KW"/>
</dbReference>
<dbReference type="InterPro" id="IPR004848">
    <property type="entry name" value="ASFV_fam_110"/>
</dbReference>
<dbReference type="Pfam" id="PF01639">
    <property type="entry name" value="v110"/>
    <property type="match status" value="1"/>
</dbReference>
<keyword id="KW-1043">Host membrane</keyword>
<keyword id="KW-0472">Membrane</keyword>
<keyword id="KW-0812">Transmembrane</keyword>
<keyword id="KW-1133">Transmembrane helix</keyword>
<evidence type="ECO:0000250" key="1"/>
<evidence type="ECO:0000255" key="2"/>
<evidence type="ECO:0000305" key="3"/>
<organismHost>
    <name type="scientific">Ornithodoros</name>
    <name type="common">relapsing fever ticks</name>
    <dbReference type="NCBI Taxonomy" id="6937"/>
</organismHost>
<organismHost>
    <name type="scientific">Phacochoerus aethiopicus</name>
    <name type="common">Warthog</name>
    <dbReference type="NCBI Taxonomy" id="85517"/>
</organismHost>
<organismHost>
    <name type="scientific">Phacochoerus africanus</name>
    <name type="common">Warthog</name>
    <dbReference type="NCBI Taxonomy" id="41426"/>
</organismHost>
<organismHost>
    <name type="scientific">Potamochoerus larvatus</name>
    <name type="common">Bushpig</name>
    <dbReference type="NCBI Taxonomy" id="273792"/>
</organismHost>
<organismHost>
    <name type="scientific">Sus scrofa</name>
    <name type="common">Pig</name>
    <dbReference type="NCBI Taxonomy" id="9823"/>
</organismHost>